<organism>
    <name type="scientific">Potamotrygon cf. henlei</name>
    <name type="common">Freshwater stingray</name>
    <dbReference type="NCBI Taxonomy" id="2805830"/>
    <lineage>
        <taxon>Eukaryota</taxon>
        <taxon>Metazoa</taxon>
        <taxon>Chordata</taxon>
        <taxon>Craniata</taxon>
        <taxon>Vertebrata</taxon>
        <taxon>Chondrichthyes</taxon>
        <taxon>Elasmobranchii</taxon>
        <taxon>Batoidea</taxon>
        <taxon>Myliobatiformes</taxon>
        <taxon>Potamotrygonidae</taxon>
        <taxon>Potamotrygon</taxon>
    </lineage>
</organism>
<comment type="function">
    <text evidence="1">Shows antimicrobial activity against M.luteus (MIC=4 uM) and E.coli (MIC=12 uM), as well as against the yeast C.tropicalis (MIC=4 uM) (PubMed:22683678). Shows a pro-inflammatory effect, since the topical application of the protein induces an increase of cellular recruitment characterized by an increase in the number of leukocyte rolling (PubMed:22683678). Does not show hemolytic activity on human erythrocytes (at doses up to 100 uM) (PubMed:22683678).</text>
</comment>
<comment type="subunit">
    <text evidence="4">Possible monomer.</text>
</comment>
<comment type="subcellular location">
    <subcellularLocation>
        <location evidence="1">Secreted</location>
    </subcellularLocation>
    <text evidence="1">Secreted in cutaneous mucus.</text>
</comment>
<comment type="tissue specificity">
    <text evidence="4">Expressed in mucus-secreting tissues.</text>
</comment>
<comment type="mass spectrometry" mass="16072.8" method="Electrospray" evidence="1"/>
<comment type="similarity">
    <text evidence="3">Belongs to the globin family.</text>
</comment>
<keyword id="KW-0044">Antibiotic</keyword>
<keyword id="KW-0929">Antimicrobial</keyword>
<keyword id="KW-0903">Direct protein sequencing</keyword>
<keyword id="KW-0295">Fungicide</keyword>
<keyword id="KW-0391">Immunity</keyword>
<keyword id="KW-0399">Innate immunity</keyword>
<keyword id="KW-0964">Secreted</keyword>
<proteinExistence type="evidence at protein level"/>
<feature type="chain" id="PRO_0000452542" description="Antimicrobial protein PcfHb" evidence="4">
    <location>
        <begin position="1"/>
        <end position="43"/>
    </location>
</feature>
<feature type="non-consecutive residues" evidence="4">
    <location>
        <begin position="32"/>
        <end position="33"/>
    </location>
</feature>
<protein>
    <recommendedName>
        <fullName evidence="2">Antimicrobial protein PcfHb</fullName>
    </recommendedName>
</protein>
<accession>P0DUJ9</accession>
<dbReference type="SMR" id="P0DUJ9"/>
<dbReference type="GO" id="GO:0005576">
    <property type="term" value="C:extracellular region"/>
    <property type="evidence" value="ECO:0007669"/>
    <property type="project" value="UniProtKB-SubCell"/>
</dbReference>
<dbReference type="GO" id="GO:0042742">
    <property type="term" value="P:defense response to bacterium"/>
    <property type="evidence" value="ECO:0007669"/>
    <property type="project" value="UniProtKB-KW"/>
</dbReference>
<dbReference type="GO" id="GO:0050832">
    <property type="term" value="P:defense response to fungus"/>
    <property type="evidence" value="ECO:0007669"/>
    <property type="project" value="UniProtKB-KW"/>
</dbReference>
<dbReference type="GO" id="GO:0045087">
    <property type="term" value="P:innate immune response"/>
    <property type="evidence" value="ECO:0007669"/>
    <property type="project" value="UniProtKB-KW"/>
</dbReference>
<dbReference type="GO" id="GO:0031640">
    <property type="term" value="P:killing of cells of another organism"/>
    <property type="evidence" value="ECO:0007669"/>
    <property type="project" value="UniProtKB-KW"/>
</dbReference>
<name>HBB_POTCF</name>
<reference key="1">
    <citation type="journal article" date="2012" name="Toxicon">
        <title>Potamotrygon cf. henlei stingray mucus: biochemical features of a novel antimicrobial protein.</title>
        <authorList>
            <person name="Conceicao K."/>
            <person name="Monteiro-dos-Santos J."/>
            <person name="Seibert C.S."/>
            <person name="Silva P.I. Jr."/>
            <person name="Marques E.E."/>
            <person name="Richardson M."/>
            <person name="Lopes-Ferreira M."/>
        </authorList>
    </citation>
    <scope>PROTEIN SEQUENCE</scope>
    <scope>SUBCELLULAR LOCATION</scope>
    <scope>MASS SPECTROMETRY</scope>
</reference>
<evidence type="ECO:0000269" key="1">
    <source>
    </source>
</evidence>
<evidence type="ECO:0000303" key="2">
    <source>
    </source>
</evidence>
<evidence type="ECO:0000305" key="3"/>
<evidence type="ECO:0000305" key="4">
    <source>
    </source>
</evidence>
<sequence length="43" mass="4970">GKLTDSQEDYIRHVWDDVNRKLITAKALERVNLVAEALSSNYH</sequence>